<gene>
    <name evidence="1" type="primary">yaaI</name>
    <name type="ordered locus">E2348C_0013</name>
</gene>
<organism>
    <name type="scientific">Escherichia coli O127:H6 (strain E2348/69 / EPEC)</name>
    <dbReference type="NCBI Taxonomy" id="574521"/>
    <lineage>
        <taxon>Bacteria</taxon>
        <taxon>Pseudomonadati</taxon>
        <taxon>Pseudomonadota</taxon>
        <taxon>Gammaproteobacteria</taxon>
        <taxon>Enterobacterales</taxon>
        <taxon>Enterobacteriaceae</taxon>
        <taxon>Escherichia</taxon>
    </lineage>
</organism>
<reference key="1">
    <citation type="journal article" date="2009" name="J. Bacteriol.">
        <title>Complete genome sequence and comparative genome analysis of enteropathogenic Escherichia coli O127:H6 strain E2348/69.</title>
        <authorList>
            <person name="Iguchi A."/>
            <person name="Thomson N.R."/>
            <person name="Ogura Y."/>
            <person name="Saunders D."/>
            <person name="Ooka T."/>
            <person name="Henderson I.R."/>
            <person name="Harris D."/>
            <person name="Asadulghani M."/>
            <person name="Kurokawa K."/>
            <person name="Dean P."/>
            <person name="Kenny B."/>
            <person name="Quail M.A."/>
            <person name="Thurston S."/>
            <person name="Dougan G."/>
            <person name="Hayashi T."/>
            <person name="Parkhill J."/>
            <person name="Frankel G."/>
        </authorList>
    </citation>
    <scope>NUCLEOTIDE SEQUENCE [LARGE SCALE GENOMIC DNA]</scope>
    <source>
        <strain>E2348/69 / EPEC</strain>
    </source>
</reference>
<keyword id="KW-1185">Reference proteome</keyword>
<keyword id="KW-0732">Signal</keyword>
<comment type="similarity">
    <text evidence="1">Belongs to the UPF0412 family.</text>
</comment>
<accession>B7UI58</accession>
<proteinExistence type="inferred from homology"/>
<evidence type="ECO:0000255" key="1">
    <source>
        <dbReference type="HAMAP-Rule" id="MF_01372"/>
    </source>
</evidence>
<feature type="signal peptide" evidence="1">
    <location>
        <begin position="1"/>
        <end position="23"/>
    </location>
</feature>
<feature type="chain" id="PRO_1000184170" description="UPF0412 protein YaaI">
    <location>
        <begin position="24"/>
        <end position="134"/>
    </location>
</feature>
<sequence length="134" mass="14550">MKSVITISASLAISLMLCCTAQANDHKILGVIAMPRNETNDLALKLPVCRIVKRIQLSTDHGDLQLSGASVYFKATRSASQTLNIPSEIKEGQTTDWININSDNDNKRCVSKITFSGHTVNSSDMATLKIIGDD</sequence>
<protein>
    <recommendedName>
        <fullName evidence="1">UPF0412 protein YaaI</fullName>
    </recommendedName>
</protein>
<dbReference type="EMBL" id="FM180568">
    <property type="protein sequence ID" value="CAS07561.1"/>
    <property type="molecule type" value="Genomic_DNA"/>
</dbReference>
<dbReference type="RefSeq" id="WP_000843691.1">
    <property type="nucleotide sequence ID" value="NC_011601.1"/>
</dbReference>
<dbReference type="KEGG" id="ecg:E2348C_0013"/>
<dbReference type="HOGENOM" id="CLU_158661_0_0_6"/>
<dbReference type="Proteomes" id="UP000008205">
    <property type="component" value="Chromosome"/>
</dbReference>
<dbReference type="HAMAP" id="MF_01372">
    <property type="entry name" value="UPF0412"/>
    <property type="match status" value="1"/>
</dbReference>
<dbReference type="InterPro" id="IPR020240">
    <property type="entry name" value="UPF0412_YaaI"/>
</dbReference>
<dbReference type="NCBIfam" id="NF007541">
    <property type="entry name" value="PRK10154.1"/>
    <property type="match status" value="1"/>
</dbReference>
<dbReference type="Pfam" id="PF10807">
    <property type="entry name" value="DUF2541"/>
    <property type="match status" value="1"/>
</dbReference>
<name>YAAI_ECO27</name>